<feature type="chain" id="PRO_1000215896" description="Methylthioribose-1-phosphate isomerase">
    <location>
        <begin position="1"/>
        <end position="346"/>
    </location>
</feature>
<feature type="active site" description="Proton donor" evidence="1">
    <location>
        <position position="236"/>
    </location>
</feature>
<feature type="binding site" evidence="1">
    <location>
        <begin position="47"/>
        <end position="49"/>
    </location>
    <ligand>
        <name>substrate</name>
    </ligand>
</feature>
<feature type="binding site" evidence="1">
    <location>
        <position position="88"/>
    </location>
    <ligand>
        <name>substrate</name>
    </ligand>
</feature>
<feature type="binding site" evidence="1">
    <location>
        <position position="195"/>
    </location>
    <ligand>
        <name>substrate</name>
    </ligand>
</feature>
<feature type="binding site" evidence="1">
    <location>
        <begin position="246"/>
        <end position="247"/>
    </location>
    <ligand>
        <name>substrate</name>
    </ligand>
</feature>
<feature type="site" description="Transition state stabilizer" evidence="1">
    <location>
        <position position="156"/>
    </location>
</feature>
<accession>C6C0F7</accession>
<evidence type="ECO:0000255" key="1">
    <source>
        <dbReference type="HAMAP-Rule" id="MF_01678"/>
    </source>
</evidence>
<evidence type="ECO:0000305" key="2"/>
<comment type="function">
    <text evidence="1">Catalyzes the interconversion of methylthioribose-1-phosphate (MTR-1-P) into methylthioribulose-1-phosphate (MTRu-1-P).</text>
</comment>
<comment type="catalytic activity">
    <reaction evidence="1">
        <text>5-(methylsulfanyl)-alpha-D-ribose 1-phosphate = 5-(methylsulfanyl)-D-ribulose 1-phosphate</text>
        <dbReference type="Rhea" id="RHEA:19989"/>
        <dbReference type="ChEBI" id="CHEBI:58533"/>
        <dbReference type="ChEBI" id="CHEBI:58548"/>
        <dbReference type="EC" id="5.3.1.23"/>
    </reaction>
</comment>
<comment type="pathway">
    <text evidence="1">Amino-acid biosynthesis; L-methionine biosynthesis via salvage pathway; L-methionine from S-methyl-5-thio-alpha-D-ribose 1-phosphate: step 1/6.</text>
</comment>
<comment type="similarity">
    <text evidence="2">Belongs to the eIF-2B alpha/beta/delta subunits family. MtnA subfamily.</text>
</comment>
<dbReference type="EC" id="5.3.1.23" evidence="1"/>
<dbReference type="EMBL" id="CP001649">
    <property type="protein sequence ID" value="ACS79091.1"/>
    <property type="molecule type" value="Genomic_DNA"/>
</dbReference>
<dbReference type="RefSeq" id="WP_015850910.1">
    <property type="nucleotide sequence ID" value="NC_012881.1"/>
</dbReference>
<dbReference type="SMR" id="C6C0F7"/>
<dbReference type="STRING" id="526222.Desal_1026"/>
<dbReference type="KEGG" id="dsa:Desal_1026"/>
<dbReference type="eggNOG" id="COG0182">
    <property type="taxonomic scope" value="Bacteria"/>
</dbReference>
<dbReference type="HOGENOM" id="CLU_016218_1_2_7"/>
<dbReference type="OrthoDB" id="9803436at2"/>
<dbReference type="UniPathway" id="UPA00904">
    <property type="reaction ID" value="UER00874"/>
</dbReference>
<dbReference type="Proteomes" id="UP000002601">
    <property type="component" value="Chromosome"/>
</dbReference>
<dbReference type="GO" id="GO:0046523">
    <property type="term" value="F:S-methyl-5-thioribose-1-phosphate isomerase activity"/>
    <property type="evidence" value="ECO:0007669"/>
    <property type="project" value="UniProtKB-UniRule"/>
</dbReference>
<dbReference type="GO" id="GO:0019509">
    <property type="term" value="P:L-methionine salvage from methylthioadenosine"/>
    <property type="evidence" value="ECO:0007669"/>
    <property type="project" value="UniProtKB-UniRule"/>
</dbReference>
<dbReference type="FunFam" id="1.20.120.420:FF:000003">
    <property type="entry name" value="Methylthioribose-1-phosphate isomerase"/>
    <property type="match status" value="1"/>
</dbReference>
<dbReference type="FunFam" id="3.40.50.10470:FF:000006">
    <property type="entry name" value="Methylthioribose-1-phosphate isomerase"/>
    <property type="match status" value="1"/>
</dbReference>
<dbReference type="Gene3D" id="1.20.120.420">
    <property type="entry name" value="translation initiation factor eif-2b, domain 1"/>
    <property type="match status" value="1"/>
</dbReference>
<dbReference type="Gene3D" id="3.40.50.10470">
    <property type="entry name" value="Translation initiation factor eif-2b, domain 2"/>
    <property type="match status" value="1"/>
</dbReference>
<dbReference type="HAMAP" id="MF_01678">
    <property type="entry name" value="Salvage_MtnA"/>
    <property type="match status" value="1"/>
</dbReference>
<dbReference type="InterPro" id="IPR000649">
    <property type="entry name" value="IF-2B-related"/>
</dbReference>
<dbReference type="InterPro" id="IPR005251">
    <property type="entry name" value="IF-M1Pi"/>
</dbReference>
<dbReference type="InterPro" id="IPR042529">
    <property type="entry name" value="IF_2B-like_C"/>
</dbReference>
<dbReference type="InterPro" id="IPR011559">
    <property type="entry name" value="Initiation_fac_2B_a/b/d"/>
</dbReference>
<dbReference type="InterPro" id="IPR027363">
    <property type="entry name" value="M1Pi_N"/>
</dbReference>
<dbReference type="InterPro" id="IPR037171">
    <property type="entry name" value="NagB/RpiA_transferase-like"/>
</dbReference>
<dbReference type="NCBIfam" id="TIGR00524">
    <property type="entry name" value="eIF-2B_rel"/>
    <property type="match status" value="1"/>
</dbReference>
<dbReference type="NCBIfam" id="NF004326">
    <property type="entry name" value="PRK05720.1"/>
    <property type="match status" value="1"/>
</dbReference>
<dbReference type="NCBIfam" id="TIGR00512">
    <property type="entry name" value="salvage_mtnA"/>
    <property type="match status" value="1"/>
</dbReference>
<dbReference type="PANTHER" id="PTHR43475">
    <property type="entry name" value="METHYLTHIORIBOSE-1-PHOSPHATE ISOMERASE"/>
    <property type="match status" value="1"/>
</dbReference>
<dbReference type="PANTHER" id="PTHR43475:SF1">
    <property type="entry name" value="METHYLTHIORIBOSE-1-PHOSPHATE ISOMERASE"/>
    <property type="match status" value="1"/>
</dbReference>
<dbReference type="Pfam" id="PF01008">
    <property type="entry name" value="IF-2B"/>
    <property type="match status" value="1"/>
</dbReference>
<dbReference type="SUPFAM" id="SSF100950">
    <property type="entry name" value="NagB/RpiA/CoA transferase-like"/>
    <property type="match status" value="1"/>
</dbReference>
<sequence>MTEHIQFSPEKDALVLLDQRYLPTREDWFDCKTTDDIVEALVVMVVRGAPAIGVTAAYGCYLAGREVAGSADWKAELEKNLDKIENARPTAVNLRWAVREMKRIWAEAGDVSLDELCAIWLKRAKEIHVDDIRMCEDIGKFGGELMDDGDTIMTHCNAGALATAGYGTALGVVRGAVDQGKKVSVIANETRPFLQGARLTAYELHRDGIPVKVACDNACALLMKKGLVQKVVVGADRVTANGDAVNKIGTYGVALLAREFGIPFYVAAPVYTIDPETPTGDDVPIEDRTPTEVTHVGDHRITPEGVEVFNFAFDPTPNELIAGIITEKGVLRPPYTEAIKKLFEDN</sequence>
<gene>
    <name evidence="1" type="primary">mtnA</name>
    <name type="ordered locus">Desal_1026</name>
</gene>
<name>MTNA_MARSD</name>
<keyword id="KW-0028">Amino-acid biosynthesis</keyword>
<keyword id="KW-0413">Isomerase</keyword>
<keyword id="KW-0486">Methionine biosynthesis</keyword>
<keyword id="KW-1185">Reference proteome</keyword>
<reference key="1">
    <citation type="submission" date="2009-06" db="EMBL/GenBank/DDBJ databases">
        <title>Complete sequence of Desulfovibrio salexigens DSM 2638.</title>
        <authorList>
            <consortium name="US DOE Joint Genome Institute"/>
            <person name="Lucas S."/>
            <person name="Copeland A."/>
            <person name="Lapidus A."/>
            <person name="Glavina del Rio T."/>
            <person name="Tice H."/>
            <person name="Bruce D."/>
            <person name="Goodwin L."/>
            <person name="Pitluck S."/>
            <person name="Munk A.C."/>
            <person name="Brettin T."/>
            <person name="Detter J.C."/>
            <person name="Han C."/>
            <person name="Tapia R."/>
            <person name="Larimer F."/>
            <person name="Land M."/>
            <person name="Hauser L."/>
            <person name="Kyrpides N."/>
            <person name="Anderson I."/>
            <person name="Wall J.D."/>
            <person name="Arkin A.P."/>
            <person name="Dehal P."/>
            <person name="Chivian D."/>
            <person name="Giles B."/>
            <person name="Hazen T.C."/>
        </authorList>
    </citation>
    <scope>NUCLEOTIDE SEQUENCE [LARGE SCALE GENOMIC DNA]</scope>
    <source>
        <strain>ATCC 14822 / DSM 2638 / NCIMB 8403 / VKM B-1763</strain>
    </source>
</reference>
<protein>
    <recommendedName>
        <fullName evidence="1">Methylthioribose-1-phosphate isomerase</fullName>
        <shortName evidence="1">M1Pi</shortName>
        <shortName evidence="1">MTR-1-P isomerase</shortName>
        <ecNumber evidence="1">5.3.1.23</ecNumber>
    </recommendedName>
    <alternativeName>
        <fullName evidence="1">S-methyl-5-thioribose-1-phosphate isomerase</fullName>
    </alternativeName>
</protein>
<organism>
    <name type="scientific">Maridesulfovibrio salexigens (strain ATCC 14822 / DSM 2638 / NCIMB 8403 / VKM B-1763)</name>
    <name type="common">Desulfovibrio salexigens</name>
    <dbReference type="NCBI Taxonomy" id="526222"/>
    <lineage>
        <taxon>Bacteria</taxon>
        <taxon>Pseudomonadati</taxon>
        <taxon>Thermodesulfobacteriota</taxon>
        <taxon>Desulfovibrionia</taxon>
        <taxon>Desulfovibrionales</taxon>
        <taxon>Desulfovibrionaceae</taxon>
        <taxon>Maridesulfovibrio</taxon>
    </lineage>
</organism>
<proteinExistence type="inferred from homology"/>